<sequence length="405" mass="43981">MTQTQYRAGPDANGLFGSFGGRYVAETLMPLVLDLAREYEAAKADPKFLEELAYFQRDYIGRPNPLYFAERLTEHCGGAKIFFKREELNHTGAHKVNNCIGQVLLAKRMGKKRLIAETGAGMHGVATATVAARFGLPCVIYMGATDIERQQANVFRMKLLGAEIVPVTAGTGTLKDAMNEALRDWVTNVEDTFYLIGTVAGPHPYPAMVRDFQSIIGKETRAQLQEKEGRLPDSLIACVGGGSNAMGLFHDFLDDASVQIIGVEAGGHGVHTDKHAASLNGGVPGVLHGNRTYLLQDDDGQITDAHSISAGLDYPGIGPEHAYLHEVKRVEYVSITDDEALDAFHATCRLEGIIPALESSHALAEAIKRAPKLPKDHLMVICLSGRGDKDMQTVMNHMAAQEKQA</sequence>
<evidence type="ECO:0000255" key="1">
    <source>
        <dbReference type="HAMAP-Rule" id="MF_00133"/>
    </source>
</evidence>
<organism>
    <name type="scientific">Pseudomonas entomophila (strain L48)</name>
    <dbReference type="NCBI Taxonomy" id="384676"/>
    <lineage>
        <taxon>Bacteria</taxon>
        <taxon>Pseudomonadati</taxon>
        <taxon>Pseudomonadota</taxon>
        <taxon>Gammaproteobacteria</taxon>
        <taxon>Pseudomonadales</taxon>
        <taxon>Pseudomonadaceae</taxon>
        <taxon>Pseudomonas</taxon>
    </lineage>
</organism>
<dbReference type="EC" id="4.2.1.20" evidence="1"/>
<dbReference type="EMBL" id="CT573326">
    <property type="protein sequence ID" value="CAK13032.1"/>
    <property type="molecule type" value="Genomic_DNA"/>
</dbReference>
<dbReference type="RefSeq" id="WP_011531493.1">
    <property type="nucleotide sequence ID" value="NC_008027.1"/>
</dbReference>
<dbReference type="SMR" id="Q1IH20"/>
<dbReference type="STRING" id="384676.PSEEN0038"/>
<dbReference type="GeneID" id="58765837"/>
<dbReference type="KEGG" id="pen:PSEEN0038"/>
<dbReference type="eggNOG" id="COG0133">
    <property type="taxonomic scope" value="Bacteria"/>
</dbReference>
<dbReference type="HOGENOM" id="CLU_016734_3_1_6"/>
<dbReference type="OrthoDB" id="9766131at2"/>
<dbReference type="UniPathway" id="UPA00035">
    <property type="reaction ID" value="UER00044"/>
</dbReference>
<dbReference type="Proteomes" id="UP000000658">
    <property type="component" value="Chromosome"/>
</dbReference>
<dbReference type="GO" id="GO:0005737">
    <property type="term" value="C:cytoplasm"/>
    <property type="evidence" value="ECO:0007669"/>
    <property type="project" value="TreeGrafter"/>
</dbReference>
<dbReference type="GO" id="GO:0004834">
    <property type="term" value="F:tryptophan synthase activity"/>
    <property type="evidence" value="ECO:0007669"/>
    <property type="project" value="UniProtKB-UniRule"/>
</dbReference>
<dbReference type="CDD" id="cd06446">
    <property type="entry name" value="Trp-synth_B"/>
    <property type="match status" value="1"/>
</dbReference>
<dbReference type="FunFam" id="3.40.50.1100:FF:000001">
    <property type="entry name" value="Tryptophan synthase beta chain"/>
    <property type="match status" value="1"/>
</dbReference>
<dbReference type="FunFam" id="3.40.50.1100:FF:000004">
    <property type="entry name" value="Tryptophan synthase beta chain"/>
    <property type="match status" value="1"/>
</dbReference>
<dbReference type="Gene3D" id="3.40.50.1100">
    <property type="match status" value="2"/>
</dbReference>
<dbReference type="HAMAP" id="MF_00133">
    <property type="entry name" value="Trp_synth_beta"/>
    <property type="match status" value="1"/>
</dbReference>
<dbReference type="InterPro" id="IPR006653">
    <property type="entry name" value="Trp_synth_b_CS"/>
</dbReference>
<dbReference type="InterPro" id="IPR006654">
    <property type="entry name" value="Trp_synth_beta"/>
</dbReference>
<dbReference type="InterPro" id="IPR023026">
    <property type="entry name" value="Trp_synth_beta/beta-like"/>
</dbReference>
<dbReference type="InterPro" id="IPR001926">
    <property type="entry name" value="TrpB-like_PALP"/>
</dbReference>
<dbReference type="InterPro" id="IPR036052">
    <property type="entry name" value="TrpB-like_PALP_sf"/>
</dbReference>
<dbReference type="NCBIfam" id="TIGR00263">
    <property type="entry name" value="trpB"/>
    <property type="match status" value="1"/>
</dbReference>
<dbReference type="PANTHER" id="PTHR48077:SF3">
    <property type="entry name" value="TRYPTOPHAN SYNTHASE"/>
    <property type="match status" value="1"/>
</dbReference>
<dbReference type="PANTHER" id="PTHR48077">
    <property type="entry name" value="TRYPTOPHAN SYNTHASE-RELATED"/>
    <property type="match status" value="1"/>
</dbReference>
<dbReference type="Pfam" id="PF00291">
    <property type="entry name" value="PALP"/>
    <property type="match status" value="1"/>
</dbReference>
<dbReference type="PIRSF" id="PIRSF001413">
    <property type="entry name" value="Trp_syn_beta"/>
    <property type="match status" value="1"/>
</dbReference>
<dbReference type="SUPFAM" id="SSF53686">
    <property type="entry name" value="Tryptophan synthase beta subunit-like PLP-dependent enzymes"/>
    <property type="match status" value="1"/>
</dbReference>
<dbReference type="PROSITE" id="PS00168">
    <property type="entry name" value="TRP_SYNTHASE_BETA"/>
    <property type="match status" value="1"/>
</dbReference>
<reference key="1">
    <citation type="journal article" date="2006" name="Nat. Biotechnol.">
        <title>Complete genome sequence of the entomopathogenic and metabolically versatile soil bacterium Pseudomonas entomophila.</title>
        <authorList>
            <person name="Vodovar N."/>
            <person name="Vallenet D."/>
            <person name="Cruveiller S."/>
            <person name="Rouy Z."/>
            <person name="Barbe V."/>
            <person name="Acosta C."/>
            <person name="Cattolico L."/>
            <person name="Jubin C."/>
            <person name="Lajus A."/>
            <person name="Segurens B."/>
            <person name="Vacherie B."/>
            <person name="Wincker P."/>
            <person name="Weissenbach J."/>
            <person name="Lemaitre B."/>
            <person name="Medigue C."/>
            <person name="Boccard F."/>
        </authorList>
    </citation>
    <scope>NUCLEOTIDE SEQUENCE [LARGE SCALE GENOMIC DNA]</scope>
    <source>
        <strain>L48</strain>
    </source>
</reference>
<feature type="chain" id="PRO_1000018376" description="Tryptophan synthase beta chain">
    <location>
        <begin position="1"/>
        <end position="405"/>
    </location>
</feature>
<feature type="modified residue" description="N6-(pyridoxal phosphate)lysine" evidence="1">
    <location>
        <position position="95"/>
    </location>
</feature>
<proteinExistence type="inferred from homology"/>
<name>TRPB_PSEE4</name>
<keyword id="KW-0028">Amino-acid biosynthesis</keyword>
<keyword id="KW-0057">Aromatic amino acid biosynthesis</keyword>
<keyword id="KW-0456">Lyase</keyword>
<keyword id="KW-0663">Pyridoxal phosphate</keyword>
<keyword id="KW-0822">Tryptophan biosynthesis</keyword>
<gene>
    <name evidence="1" type="primary">trpB</name>
    <name type="ordered locus">PSEEN0038</name>
</gene>
<protein>
    <recommendedName>
        <fullName evidence="1">Tryptophan synthase beta chain</fullName>
        <ecNumber evidence="1">4.2.1.20</ecNumber>
    </recommendedName>
</protein>
<comment type="function">
    <text evidence="1">The beta subunit is responsible for the synthesis of L-tryptophan from indole and L-serine.</text>
</comment>
<comment type="catalytic activity">
    <reaction evidence="1">
        <text>(1S,2R)-1-C-(indol-3-yl)glycerol 3-phosphate + L-serine = D-glyceraldehyde 3-phosphate + L-tryptophan + H2O</text>
        <dbReference type="Rhea" id="RHEA:10532"/>
        <dbReference type="ChEBI" id="CHEBI:15377"/>
        <dbReference type="ChEBI" id="CHEBI:33384"/>
        <dbReference type="ChEBI" id="CHEBI:57912"/>
        <dbReference type="ChEBI" id="CHEBI:58866"/>
        <dbReference type="ChEBI" id="CHEBI:59776"/>
        <dbReference type="EC" id="4.2.1.20"/>
    </reaction>
</comment>
<comment type="cofactor">
    <cofactor evidence="1">
        <name>pyridoxal 5'-phosphate</name>
        <dbReference type="ChEBI" id="CHEBI:597326"/>
    </cofactor>
</comment>
<comment type="pathway">
    <text evidence="1">Amino-acid biosynthesis; L-tryptophan biosynthesis; L-tryptophan from chorismate: step 5/5.</text>
</comment>
<comment type="subunit">
    <text evidence="1">Tetramer of two alpha and two beta chains.</text>
</comment>
<comment type="similarity">
    <text evidence="1">Belongs to the TrpB family.</text>
</comment>
<accession>Q1IH20</accession>